<reference key="1">
    <citation type="journal article" date="2004" name="Genes Immun.">
        <title>Evolution of the mannose-binding lectin gene in primates.</title>
        <authorList>
            <person name="Verga Falzacappa M.V."/>
            <person name="Segat L."/>
            <person name="Puppini B."/>
            <person name="Amoroso A."/>
            <person name="Crovella S."/>
        </authorList>
    </citation>
    <scope>NUCLEOTIDE SEQUENCE [GENOMIC DNA]</scope>
</reference>
<comment type="function">
    <text evidence="1">Calcium-dependent lectin involved in innate immune defense. Binds mannose, fucose and N-acetylglucosamine on different microorganisms and activates the lectin complement pathway. Binds to late apoptotic cells, as well as to apoptotic blebs and to necrotic cells, but not to early apoptotic cells, facilitating their uptake by macrophages (By similarity).</text>
</comment>
<comment type="subunit">
    <text evidence="1">Oligomeric complex of 3 or more homotrimers. Interacts with MASP1 and MASP2 (By similarity). Interacts with MEP1A and MEP1B and may inhibit their catalytic activity (By similarity).</text>
</comment>
<comment type="subcellular location">
    <subcellularLocation>
        <location evidence="1">Secreted</location>
    </subcellularLocation>
</comment>
<comment type="domain">
    <text evidence="1">The coiled-coil domain mediates trimerization.</text>
</comment>
<comment type="PTM">
    <text evidence="1">Hydroxylation on proline residues within the sequence motif, GXPG, is most likely to be 4-hydroxy as this fits the requirement for 4-hydroxylation in vertebrates.</text>
</comment>
<organism>
    <name type="scientific">Chlorocebus aethiops</name>
    <name type="common">Green monkey</name>
    <name type="synonym">Cercopithecus aethiops</name>
    <dbReference type="NCBI Taxonomy" id="9534"/>
    <lineage>
        <taxon>Eukaryota</taxon>
        <taxon>Metazoa</taxon>
        <taxon>Chordata</taxon>
        <taxon>Craniata</taxon>
        <taxon>Vertebrata</taxon>
        <taxon>Euteleostomi</taxon>
        <taxon>Mammalia</taxon>
        <taxon>Eutheria</taxon>
        <taxon>Euarchontoglires</taxon>
        <taxon>Primates</taxon>
        <taxon>Haplorrhini</taxon>
        <taxon>Catarrhini</taxon>
        <taxon>Cercopithecidae</taxon>
        <taxon>Cercopithecinae</taxon>
        <taxon>Chlorocebus</taxon>
    </lineage>
</organism>
<keyword id="KW-0106">Calcium</keyword>
<keyword id="KW-0175">Coiled coil</keyword>
<keyword id="KW-0176">Collagen</keyword>
<keyword id="KW-1018">Complement activation lectin pathway</keyword>
<keyword id="KW-0180">Complement pathway</keyword>
<keyword id="KW-1015">Disulfide bond</keyword>
<keyword id="KW-0379">Hydroxylation</keyword>
<keyword id="KW-0391">Immunity</keyword>
<keyword id="KW-0399">Innate immunity</keyword>
<keyword id="KW-0430">Lectin</keyword>
<keyword id="KW-0465">Mannose-binding</keyword>
<keyword id="KW-0677">Repeat</keyword>
<keyword id="KW-0964">Secreted</keyword>
<keyword id="KW-0732">Signal</keyword>
<accession>Q66S37</accession>
<feature type="signal peptide" evidence="1">
    <location>
        <begin position="1"/>
        <end position="20"/>
    </location>
</feature>
<feature type="chain" id="PRO_0000017399" description="Mannose-binding protein C">
    <location>
        <begin position="21"/>
        <end position="248"/>
    </location>
</feature>
<feature type="domain" description="Collagen-like">
    <location>
        <begin position="42"/>
        <end position="99"/>
    </location>
</feature>
<feature type="domain" description="C-type lectin" evidence="2">
    <location>
        <begin position="134"/>
        <end position="245"/>
    </location>
</feature>
<feature type="region of interest" description="Disordered" evidence="3">
    <location>
        <begin position="43"/>
        <end position="113"/>
    </location>
</feature>
<feature type="coiled-coil region" evidence="1">
    <location>
        <begin position="112"/>
        <end position="130"/>
    </location>
</feature>
<feature type="compositionally biased region" description="Basic and acidic residues" evidence="3">
    <location>
        <begin position="49"/>
        <end position="61"/>
    </location>
</feature>
<feature type="compositionally biased region" description="Low complexity" evidence="3">
    <location>
        <begin position="82"/>
        <end position="91"/>
    </location>
</feature>
<feature type="modified residue" description="4-hydroxyproline" evidence="1">
    <location>
        <position position="47"/>
    </location>
</feature>
<feature type="modified residue" description="4-hydroxyproline" evidence="1">
    <location>
        <position position="73"/>
    </location>
</feature>
<feature type="modified residue" description="4-hydroxyproline" evidence="1">
    <location>
        <position position="79"/>
    </location>
</feature>
<feature type="modified residue" description="4-hydroxyproline" evidence="1">
    <location>
        <position position="82"/>
    </location>
</feature>
<feature type="modified residue" description="4-hydroxyproline" evidence="1">
    <location>
        <position position="88"/>
    </location>
</feature>
<feature type="disulfide bond" evidence="2">
    <location>
        <begin position="155"/>
        <end position="244"/>
    </location>
</feature>
<feature type="disulfide bond" evidence="2">
    <location>
        <begin position="222"/>
        <end position="236"/>
    </location>
</feature>
<proteinExistence type="inferred from homology"/>
<gene>
    <name type="primary">MBL2</name>
</gene>
<evidence type="ECO:0000250" key="1"/>
<evidence type="ECO:0000255" key="2">
    <source>
        <dbReference type="PROSITE-ProRule" id="PRU00040"/>
    </source>
</evidence>
<evidence type="ECO:0000256" key="3">
    <source>
        <dbReference type="SAM" id="MobiDB-lite"/>
    </source>
</evidence>
<dbReference type="EMBL" id="AY707523">
    <property type="protein sequence ID" value="AAU11300.1"/>
    <property type="molecule type" value="Genomic_DNA"/>
</dbReference>
<dbReference type="EMBL" id="AY707520">
    <property type="protein sequence ID" value="AAU11300.1"/>
    <property type="status" value="JOINED"/>
    <property type="molecule type" value="Genomic_DNA"/>
</dbReference>
<dbReference type="EMBL" id="AY707521">
    <property type="protein sequence ID" value="AAU11300.1"/>
    <property type="status" value="JOINED"/>
    <property type="molecule type" value="Genomic_DNA"/>
</dbReference>
<dbReference type="EMBL" id="AY707522">
    <property type="protein sequence ID" value="AAU11300.1"/>
    <property type="status" value="JOINED"/>
    <property type="molecule type" value="Genomic_DNA"/>
</dbReference>
<dbReference type="SMR" id="Q66S37"/>
<dbReference type="GO" id="GO:0005581">
    <property type="term" value="C:collagen trimer"/>
    <property type="evidence" value="ECO:0007669"/>
    <property type="project" value="UniProtKB-KW"/>
</dbReference>
<dbReference type="GO" id="GO:0005615">
    <property type="term" value="C:extracellular space"/>
    <property type="evidence" value="ECO:0007669"/>
    <property type="project" value="TreeGrafter"/>
</dbReference>
<dbReference type="GO" id="GO:0005771">
    <property type="term" value="C:multivesicular body"/>
    <property type="evidence" value="ECO:0007669"/>
    <property type="project" value="TreeGrafter"/>
</dbReference>
<dbReference type="GO" id="GO:0005537">
    <property type="term" value="F:D-mannose binding"/>
    <property type="evidence" value="ECO:0007669"/>
    <property type="project" value="UniProtKB-KW"/>
</dbReference>
<dbReference type="GO" id="GO:0006958">
    <property type="term" value="P:complement activation, classical pathway"/>
    <property type="evidence" value="ECO:0007669"/>
    <property type="project" value="UniProtKB-KW"/>
</dbReference>
<dbReference type="GO" id="GO:0001867">
    <property type="term" value="P:complement activation, lectin pathway"/>
    <property type="evidence" value="ECO:0007669"/>
    <property type="project" value="UniProtKB-KW"/>
</dbReference>
<dbReference type="CDD" id="cd03591">
    <property type="entry name" value="CLECT_collectin_like"/>
    <property type="match status" value="1"/>
</dbReference>
<dbReference type="FunFam" id="3.10.100.10:FF:000088">
    <property type="entry name" value="Mannose-binding protein A"/>
    <property type="match status" value="1"/>
</dbReference>
<dbReference type="Gene3D" id="3.10.100.10">
    <property type="entry name" value="Mannose-Binding Protein A, subunit A"/>
    <property type="match status" value="1"/>
</dbReference>
<dbReference type="InterPro" id="IPR001304">
    <property type="entry name" value="C-type_lectin-like"/>
</dbReference>
<dbReference type="InterPro" id="IPR016186">
    <property type="entry name" value="C-type_lectin-like/link_sf"/>
</dbReference>
<dbReference type="InterPro" id="IPR018378">
    <property type="entry name" value="C-type_lectin_CS"/>
</dbReference>
<dbReference type="InterPro" id="IPR051077">
    <property type="entry name" value="Ca-dependent_lectin"/>
</dbReference>
<dbReference type="InterPro" id="IPR008160">
    <property type="entry name" value="Collagen"/>
</dbReference>
<dbReference type="InterPro" id="IPR033990">
    <property type="entry name" value="Collectin_CTLD"/>
</dbReference>
<dbReference type="InterPro" id="IPR016187">
    <property type="entry name" value="CTDL_fold"/>
</dbReference>
<dbReference type="PANTHER" id="PTHR24024:SF34">
    <property type="entry name" value="MANNOSE-BINDING PROTEIN C"/>
    <property type="match status" value="1"/>
</dbReference>
<dbReference type="PANTHER" id="PTHR24024">
    <property type="entry name" value="PULMONARY SURFACTANT-ASSOCIATED PROTEIN A"/>
    <property type="match status" value="1"/>
</dbReference>
<dbReference type="Pfam" id="PF01391">
    <property type="entry name" value="Collagen"/>
    <property type="match status" value="1"/>
</dbReference>
<dbReference type="Pfam" id="PF00059">
    <property type="entry name" value="Lectin_C"/>
    <property type="match status" value="1"/>
</dbReference>
<dbReference type="SMART" id="SM00034">
    <property type="entry name" value="CLECT"/>
    <property type="match status" value="1"/>
</dbReference>
<dbReference type="SUPFAM" id="SSF56436">
    <property type="entry name" value="C-type lectin-like"/>
    <property type="match status" value="1"/>
</dbReference>
<dbReference type="SUPFAM" id="SSF57944">
    <property type="entry name" value="Triple coiled coil domain of C-type lectins"/>
    <property type="match status" value="1"/>
</dbReference>
<dbReference type="PROSITE" id="PS00615">
    <property type="entry name" value="C_TYPE_LECTIN_1"/>
    <property type="match status" value="1"/>
</dbReference>
<dbReference type="PROSITE" id="PS50041">
    <property type="entry name" value="C_TYPE_LECTIN_2"/>
    <property type="match status" value="1"/>
</dbReference>
<sequence length="248" mass="26238">MSLFPSLTLLLLSVVATSYSETVTCEDSQKICPAVIACNSPGINGFPGKDGRDGTKGEKGEPGQGLRGLQGPPGKLGPPGNPGSSGSPGPKGQKGDPGESPDGDSSLAASERKALQTEMARIKKWLTFSLGRQVGNKFFLTNGEMMSFDKVKALCAKFQASVATPRNAAENRAIQNLIKEEAFLGITDENTEGEFVDLTGNKLTYTNWNNGEPNNAGSNEDCVLLLKNGKWNDIPCSSSHLALCEFPI</sequence>
<protein>
    <recommendedName>
        <fullName>Mannose-binding protein C</fullName>
        <shortName>MBP-C</shortName>
    </recommendedName>
    <alternativeName>
        <fullName>MBP1</fullName>
    </alternativeName>
    <alternativeName>
        <fullName>Mannan-binding protein</fullName>
    </alternativeName>
    <alternativeName>
        <fullName>Mannose-binding lectin</fullName>
    </alternativeName>
</protein>
<name>MBL2_CHLAE</name>